<keyword id="KW-0687">Ribonucleoprotein</keyword>
<keyword id="KW-0689">Ribosomal protein</keyword>
<keyword id="KW-0694">RNA-binding</keyword>
<keyword id="KW-0699">rRNA-binding</keyword>
<name>RL15_METM6</name>
<protein>
    <recommendedName>
        <fullName evidence="1">Large ribosomal subunit protein uL15</fullName>
    </recommendedName>
    <alternativeName>
        <fullName evidence="3">50S ribosomal protein L15</fullName>
    </alternativeName>
</protein>
<gene>
    <name evidence="1" type="primary">rpl15</name>
    <name type="ordered locus">MmarC6_1252</name>
</gene>
<feature type="chain" id="PRO_1000142840" description="Large ribosomal subunit protein uL15">
    <location>
        <begin position="1"/>
        <end position="143"/>
    </location>
</feature>
<feature type="region of interest" description="Disordered" evidence="2">
    <location>
        <begin position="1"/>
        <end position="38"/>
    </location>
</feature>
<feature type="compositionally biased region" description="Basic residues" evidence="2">
    <location>
        <begin position="1"/>
        <end position="13"/>
    </location>
</feature>
<feature type="compositionally biased region" description="Basic residues" evidence="2">
    <location>
        <begin position="23"/>
        <end position="38"/>
    </location>
</feature>
<dbReference type="EMBL" id="CP000867">
    <property type="protein sequence ID" value="ABX02065.1"/>
    <property type="molecule type" value="Genomic_DNA"/>
</dbReference>
<dbReference type="SMR" id="A9A9P2"/>
<dbReference type="STRING" id="444158.MmarC6_1252"/>
<dbReference type="KEGG" id="mmx:MmarC6_1252"/>
<dbReference type="eggNOG" id="arCOG00779">
    <property type="taxonomic scope" value="Archaea"/>
</dbReference>
<dbReference type="HOGENOM" id="CLU_109163_0_0_2"/>
<dbReference type="OrthoDB" id="9418at2157"/>
<dbReference type="PhylomeDB" id="A9A9P2"/>
<dbReference type="GO" id="GO:0022625">
    <property type="term" value="C:cytosolic large ribosomal subunit"/>
    <property type="evidence" value="ECO:0007669"/>
    <property type="project" value="TreeGrafter"/>
</dbReference>
<dbReference type="GO" id="GO:0019843">
    <property type="term" value="F:rRNA binding"/>
    <property type="evidence" value="ECO:0007669"/>
    <property type="project" value="UniProtKB-UniRule"/>
</dbReference>
<dbReference type="GO" id="GO:0003735">
    <property type="term" value="F:structural constituent of ribosome"/>
    <property type="evidence" value="ECO:0007669"/>
    <property type="project" value="InterPro"/>
</dbReference>
<dbReference type="GO" id="GO:0006412">
    <property type="term" value="P:translation"/>
    <property type="evidence" value="ECO:0007669"/>
    <property type="project" value="UniProtKB-UniRule"/>
</dbReference>
<dbReference type="Gene3D" id="3.100.10.10">
    <property type="match status" value="1"/>
</dbReference>
<dbReference type="Gene3D" id="4.10.990.10">
    <property type="match status" value="1"/>
</dbReference>
<dbReference type="HAMAP" id="MF_01341">
    <property type="entry name" value="Ribosomal_uL15"/>
    <property type="match status" value="1"/>
</dbReference>
<dbReference type="InterPro" id="IPR027386">
    <property type="entry name" value="Rbsml_uL15_N"/>
</dbReference>
<dbReference type="InterPro" id="IPR030878">
    <property type="entry name" value="Ribosomal_uL15"/>
</dbReference>
<dbReference type="InterPro" id="IPR021131">
    <property type="entry name" value="Ribosomal_uL15/eL18"/>
</dbReference>
<dbReference type="InterPro" id="IPR036227">
    <property type="entry name" value="Ribosomal_uL15/eL18_sf"/>
</dbReference>
<dbReference type="InterPro" id="IPR001196">
    <property type="entry name" value="Ribosomal_uL15_CS"/>
</dbReference>
<dbReference type="PANTHER" id="PTHR11721">
    <property type="entry name" value="60S RIBOSOMAL PROTEIN L27A"/>
    <property type="match status" value="1"/>
</dbReference>
<dbReference type="PANTHER" id="PTHR11721:SF3">
    <property type="entry name" value="LARGE RIBOSOMAL SUBUNIT PROTEIN UL15"/>
    <property type="match status" value="1"/>
</dbReference>
<dbReference type="Pfam" id="PF00828">
    <property type="entry name" value="Ribosomal_L27A"/>
    <property type="match status" value="1"/>
</dbReference>
<dbReference type="SUPFAM" id="SSF52080">
    <property type="entry name" value="Ribosomal proteins L15p and L18e"/>
    <property type="match status" value="1"/>
</dbReference>
<dbReference type="PROSITE" id="PS00475">
    <property type="entry name" value="RIBOSOMAL_L15"/>
    <property type="match status" value="1"/>
</dbReference>
<sequence>MIRKSKKITKMRGSRTCGYGEAKKHRGAGHRGGRGNAGHQKHKWLSVCKFNPDYFGKYGFNRNPGLIKQLETINIGELEEYILKYKDAFQVEDGKVVVDATEIGFEKVLGKGRISTAMVVKAVEFSEGAKEKIEAAGGEFVEL</sequence>
<reference key="1">
    <citation type="submission" date="2007-10" db="EMBL/GenBank/DDBJ databases">
        <title>Complete sequence of Methanococcus maripaludis C6.</title>
        <authorList>
            <consortium name="US DOE Joint Genome Institute"/>
            <person name="Copeland A."/>
            <person name="Lucas S."/>
            <person name="Lapidus A."/>
            <person name="Barry K."/>
            <person name="Glavina del Rio T."/>
            <person name="Dalin E."/>
            <person name="Tice H."/>
            <person name="Pitluck S."/>
            <person name="Clum A."/>
            <person name="Schmutz J."/>
            <person name="Larimer F."/>
            <person name="Land M."/>
            <person name="Hauser L."/>
            <person name="Kyrpides N."/>
            <person name="Mikhailova N."/>
            <person name="Sieprawska-Lupa M."/>
            <person name="Whitman W.B."/>
            <person name="Richardson P."/>
        </authorList>
    </citation>
    <scope>NUCLEOTIDE SEQUENCE [LARGE SCALE GENOMIC DNA]</scope>
    <source>
        <strain>C6 / ATCC BAA-1332</strain>
    </source>
</reference>
<evidence type="ECO:0000255" key="1">
    <source>
        <dbReference type="HAMAP-Rule" id="MF_01341"/>
    </source>
</evidence>
<evidence type="ECO:0000256" key="2">
    <source>
        <dbReference type="SAM" id="MobiDB-lite"/>
    </source>
</evidence>
<evidence type="ECO:0000305" key="3"/>
<comment type="function">
    <text evidence="1">Binds to the 23S rRNA.</text>
</comment>
<comment type="subunit">
    <text evidence="1">Part of the 50S ribosomal subunit.</text>
</comment>
<comment type="similarity">
    <text evidence="1">Belongs to the universal ribosomal protein uL15 family.</text>
</comment>
<organism>
    <name type="scientific">Methanococcus maripaludis (strain C6 / ATCC BAA-1332)</name>
    <dbReference type="NCBI Taxonomy" id="444158"/>
    <lineage>
        <taxon>Archaea</taxon>
        <taxon>Methanobacteriati</taxon>
        <taxon>Methanobacteriota</taxon>
        <taxon>Methanomada group</taxon>
        <taxon>Methanococci</taxon>
        <taxon>Methanococcales</taxon>
        <taxon>Methanococcaceae</taxon>
        <taxon>Methanococcus</taxon>
    </lineage>
</organism>
<accession>A9A9P2</accession>
<proteinExistence type="inferred from homology"/>